<comment type="function">
    <text evidence="1">Responsible for methylating the 5'-cap structure of mRNAs.</text>
</comment>
<comment type="catalytic activity">
    <reaction evidence="2 3">
        <text>a 5'-end (5'-triphosphoguanosine)-ribonucleoside in mRNA + S-adenosyl-L-methionine = a 5'-end (N(7)-methyl 5'-triphosphoguanosine)-ribonucleoside in mRNA + S-adenosyl-L-homocysteine</text>
        <dbReference type="Rhea" id="RHEA:67008"/>
        <dbReference type="Rhea" id="RHEA-COMP:17166"/>
        <dbReference type="Rhea" id="RHEA-COMP:17167"/>
        <dbReference type="ChEBI" id="CHEBI:57856"/>
        <dbReference type="ChEBI" id="CHEBI:59789"/>
        <dbReference type="ChEBI" id="CHEBI:156461"/>
        <dbReference type="ChEBI" id="CHEBI:167617"/>
        <dbReference type="EC" id="2.1.1.56"/>
    </reaction>
</comment>
<comment type="subcellular location">
    <subcellularLocation>
        <location evidence="1">Nucleus</location>
    </subcellularLocation>
</comment>
<comment type="similarity">
    <text evidence="3">Belongs to the class I-like SAM-binding methyltransferase superfamily. mRNA cap 0 methyltransferase family.</text>
</comment>
<reference key="1">
    <citation type="journal article" date="2005" name="Nature">
        <title>Genome sequencing and analysis of Aspergillus oryzae.</title>
        <authorList>
            <person name="Machida M."/>
            <person name="Asai K."/>
            <person name="Sano M."/>
            <person name="Tanaka T."/>
            <person name="Kumagai T."/>
            <person name="Terai G."/>
            <person name="Kusumoto K."/>
            <person name="Arima T."/>
            <person name="Akita O."/>
            <person name="Kashiwagi Y."/>
            <person name="Abe K."/>
            <person name="Gomi K."/>
            <person name="Horiuchi H."/>
            <person name="Kitamoto K."/>
            <person name="Kobayashi T."/>
            <person name="Takeuchi M."/>
            <person name="Denning D.W."/>
            <person name="Galagan J.E."/>
            <person name="Nierman W.C."/>
            <person name="Yu J."/>
            <person name="Archer D.B."/>
            <person name="Bennett J.W."/>
            <person name="Bhatnagar D."/>
            <person name="Cleveland T.E."/>
            <person name="Fedorova N.D."/>
            <person name="Gotoh O."/>
            <person name="Horikawa H."/>
            <person name="Hosoyama A."/>
            <person name="Ichinomiya M."/>
            <person name="Igarashi R."/>
            <person name="Iwashita K."/>
            <person name="Juvvadi P.R."/>
            <person name="Kato M."/>
            <person name="Kato Y."/>
            <person name="Kin T."/>
            <person name="Kokubun A."/>
            <person name="Maeda H."/>
            <person name="Maeyama N."/>
            <person name="Maruyama J."/>
            <person name="Nagasaki H."/>
            <person name="Nakajima T."/>
            <person name="Oda K."/>
            <person name="Okada K."/>
            <person name="Paulsen I."/>
            <person name="Sakamoto K."/>
            <person name="Sawano T."/>
            <person name="Takahashi M."/>
            <person name="Takase K."/>
            <person name="Terabayashi Y."/>
            <person name="Wortman J.R."/>
            <person name="Yamada O."/>
            <person name="Yamagata Y."/>
            <person name="Anazawa H."/>
            <person name="Hata Y."/>
            <person name="Koide Y."/>
            <person name="Komori T."/>
            <person name="Koyama Y."/>
            <person name="Minetoki T."/>
            <person name="Suharnan S."/>
            <person name="Tanaka A."/>
            <person name="Isono K."/>
            <person name="Kuhara S."/>
            <person name="Ogasawara N."/>
            <person name="Kikuchi H."/>
        </authorList>
    </citation>
    <scope>NUCLEOTIDE SEQUENCE [LARGE SCALE GENOMIC DNA]</scope>
    <source>
        <strain>ATCC 42149 / RIB 40</strain>
    </source>
</reference>
<proteinExistence type="inferred from homology"/>
<accession>Q2UM19</accession>
<feature type="chain" id="PRO_0000303904" description="mRNA cap guanine-N(7) methyltransferase">
    <location>
        <begin position="1"/>
        <end position="502"/>
    </location>
</feature>
<feature type="domain" description="mRNA cap 0 methyltransferase" evidence="3">
    <location>
        <begin position="146"/>
        <end position="502"/>
    </location>
</feature>
<feature type="region of interest" description="Disordered" evidence="4">
    <location>
        <begin position="1"/>
        <end position="118"/>
    </location>
</feature>
<feature type="region of interest" description="Disordered" evidence="4">
    <location>
        <begin position="360"/>
        <end position="381"/>
    </location>
</feature>
<feature type="compositionally biased region" description="Basic and acidic residues" evidence="4">
    <location>
        <begin position="93"/>
        <end position="115"/>
    </location>
</feature>
<feature type="compositionally biased region" description="Basic and acidic residues" evidence="4">
    <location>
        <begin position="360"/>
        <end position="369"/>
    </location>
</feature>
<feature type="compositionally biased region" description="Acidic residues" evidence="4">
    <location>
        <begin position="370"/>
        <end position="381"/>
    </location>
</feature>
<feature type="binding site" evidence="3">
    <location>
        <begin position="155"/>
        <end position="156"/>
    </location>
    <ligand>
        <name>mRNA</name>
        <dbReference type="ChEBI" id="CHEBI:33699"/>
    </ligand>
    <ligandPart>
        <name>mRNA cap</name>
    </ligandPart>
</feature>
<feature type="binding site" evidence="3">
    <location>
        <position position="159"/>
    </location>
    <ligand>
        <name>S-adenosyl-L-methionine</name>
        <dbReference type="ChEBI" id="CHEBI:59789"/>
    </ligand>
</feature>
<feature type="binding site" evidence="3">
    <location>
        <position position="202"/>
    </location>
    <ligand>
        <name>S-adenosyl-L-methionine</name>
        <dbReference type="ChEBI" id="CHEBI:59789"/>
    </ligand>
</feature>
<feature type="binding site" evidence="3">
    <location>
        <position position="226"/>
    </location>
    <ligand>
        <name>S-adenosyl-L-methionine</name>
        <dbReference type="ChEBI" id="CHEBI:59789"/>
    </ligand>
</feature>
<feature type="binding site" evidence="2">
    <location>
        <position position="264"/>
    </location>
    <ligand>
        <name>S-adenosyl-L-methionine</name>
        <dbReference type="ChEBI" id="CHEBI:59789"/>
    </ligand>
</feature>
<feature type="binding site" evidence="3">
    <location>
        <begin position="307"/>
        <end position="309"/>
    </location>
    <ligand>
        <name>S-adenosyl-L-methionine</name>
        <dbReference type="ChEBI" id="CHEBI:59789"/>
    </ligand>
</feature>
<feature type="binding site" evidence="2">
    <location>
        <position position="312"/>
    </location>
    <ligand>
        <name>S-adenosyl-L-methionine</name>
        <dbReference type="ChEBI" id="CHEBI:59789"/>
    </ligand>
</feature>
<feature type="site" description="mRNA cap binding" evidence="3">
    <location>
        <position position="205"/>
    </location>
</feature>
<feature type="site" description="mRNA cap binding" evidence="3">
    <location>
        <position position="211"/>
    </location>
</feature>
<feature type="site" description="mRNA cap binding" evidence="3">
    <location>
        <position position="238"/>
    </location>
</feature>
<feature type="site" description="mRNA cap binding" evidence="3">
    <location>
        <position position="311"/>
    </location>
</feature>
<feature type="site" description="mRNA cap binding" evidence="3">
    <location>
        <position position="426"/>
    </location>
</feature>
<feature type="site" description="mRNA cap binding" evidence="3">
    <location>
        <position position="494"/>
    </location>
</feature>
<gene>
    <name type="primary">abd1</name>
    <name type="ORF">AO090003000177</name>
</gene>
<dbReference type="EC" id="2.1.1.56" evidence="2"/>
<dbReference type="EMBL" id="BA000050">
    <property type="protein sequence ID" value="BAE57396.1"/>
    <property type="molecule type" value="Genomic_DNA"/>
</dbReference>
<dbReference type="SMR" id="Q2UM19"/>
<dbReference type="STRING" id="510516.Q2UM19"/>
<dbReference type="EnsemblFungi" id="BAE57396">
    <property type="protein sequence ID" value="BAE57396"/>
    <property type="gene ID" value="AO090003000177"/>
</dbReference>
<dbReference type="HOGENOM" id="CLU_020346_3_1_1"/>
<dbReference type="OMA" id="KPFLEVW"/>
<dbReference type="Proteomes" id="UP000006564">
    <property type="component" value="Chromosome 2"/>
</dbReference>
<dbReference type="GO" id="GO:0005634">
    <property type="term" value="C:nucleus"/>
    <property type="evidence" value="ECO:0007669"/>
    <property type="project" value="UniProtKB-SubCell"/>
</dbReference>
<dbReference type="GO" id="GO:0004482">
    <property type="term" value="F:mRNA 5'-cap (guanine-N7-)-methyltransferase activity"/>
    <property type="evidence" value="ECO:0007669"/>
    <property type="project" value="UniProtKB-EC"/>
</dbReference>
<dbReference type="GO" id="GO:0003723">
    <property type="term" value="F:RNA binding"/>
    <property type="evidence" value="ECO:0007669"/>
    <property type="project" value="UniProtKB-KW"/>
</dbReference>
<dbReference type="FunFam" id="3.40.50.150:FF:000231">
    <property type="entry name" value="mRNA cap guanine-N7 methyltransferase"/>
    <property type="match status" value="1"/>
</dbReference>
<dbReference type="Gene3D" id="3.40.50.150">
    <property type="entry name" value="Vaccinia Virus protein VP39"/>
    <property type="match status" value="1"/>
</dbReference>
<dbReference type="InterPro" id="IPR004971">
    <property type="entry name" value="mRNA_G-N7_MeTrfase_dom"/>
</dbReference>
<dbReference type="InterPro" id="IPR016899">
    <property type="entry name" value="mRNA_G-N7_MeTrfase_euk"/>
</dbReference>
<dbReference type="InterPro" id="IPR039753">
    <property type="entry name" value="RG7MT1"/>
</dbReference>
<dbReference type="InterPro" id="IPR029063">
    <property type="entry name" value="SAM-dependent_MTases_sf"/>
</dbReference>
<dbReference type="PANTHER" id="PTHR12189:SF2">
    <property type="entry name" value="MRNA CAP GUANINE-N7 METHYLTRANSFERASE"/>
    <property type="match status" value="1"/>
</dbReference>
<dbReference type="PANTHER" id="PTHR12189">
    <property type="entry name" value="MRNA GUANINE-7- METHYLTRANSFERASE"/>
    <property type="match status" value="1"/>
</dbReference>
<dbReference type="Pfam" id="PF03291">
    <property type="entry name" value="mRNA_G-N7_MeTrfase"/>
    <property type="match status" value="1"/>
</dbReference>
<dbReference type="PIRSF" id="PIRSF028762">
    <property type="entry name" value="ABD1"/>
    <property type="match status" value="1"/>
</dbReference>
<dbReference type="SUPFAM" id="SSF53335">
    <property type="entry name" value="S-adenosyl-L-methionine-dependent methyltransferases"/>
    <property type="match status" value="1"/>
</dbReference>
<dbReference type="PROSITE" id="PS51562">
    <property type="entry name" value="RNA_CAP0_MT"/>
    <property type="match status" value="1"/>
</dbReference>
<evidence type="ECO:0000250" key="1"/>
<evidence type="ECO:0000250" key="2">
    <source>
        <dbReference type="UniProtKB" id="O43148"/>
    </source>
</evidence>
<evidence type="ECO:0000255" key="3">
    <source>
        <dbReference type="PROSITE-ProRule" id="PRU00895"/>
    </source>
</evidence>
<evidence type="ECO:0000256" key="4">
    <source>
        <dbReference type="SAM" id="MobiDB-lite"/>
    </source>
</evidence>
<organism>
    <name type="scientific">Aspergillus oryzae (strain ATCC 42149 / RIB 40)</name>
    <name type="common">Yellow koji mold</name>
    <dbReference type="NCBI Taxonomy" id="510516"/>
    <lineage>
        <taxon>Eukaryota</taxon>
        <taxon>Fungi</taxon>
        <taxon>Dikarya</taxon>
        <taxon>Ascomycota</taxon>
        <taxon>Pezizomycotina</taxon>
        <taxon>Eurotiomycetes</taxon>
        <taxon>Eurotiomycetidae</taxon>
        <taxon>Eurotiales</taxon>
        <taxon>Aspergillaceae</taxon>
        <taxon>Aspergillus</taxon>
        <taxon>Aspergillus subgen. Circumdati</taxon>
    </lineage>
</organism>
<name>MCES_ASPOR</name>
<protein>
    <recommendedName>
        <fullName>mRNA cap guanine-N(7) methyltransferase</fullName>
        <ecNumber evidence="2">2.1.1.56</ecNumber>
    </recommendedName>
    <alternativeName>
        <fullName>mRNA (guanine-N(7))-methyltransferase</fullName>
    </alternativeName>
    <alternativeName>
        <fullName>mRNA cap methyltransferase</fullName>
    </alternativeName>
</protein>
<keyword id="KW-0489">Methyltransferase</keyword>
<keyword id="KW-0506">mRNA capping</keyword>
<keyword id="KW-0507">mRNA processing</keyword>
<keyword id="KW-0539">Nucleus</keyword>
<keyword id="KW-1185">Reference proteome</keyword>
<keyword id="KW-0694">RNA-binding</keyword>
<keyword id="KW-0949">S-adenosyl-L-methionine</keyword>
<keyword id="KW-0808">Transferase</keyword>
<sequence length="502" mass="56971">MADENPQAQGAEGGGKGKSSSMRLQERHQQLRKRGRTPPSAYARRDMNETAQQHNRNESSNRSPSPLAPPRSPSPDAQARKRKRPGGGARMGLVDRETLRRRQEERERSQQEEAMRFSQNRGVTDIVRHHYNAVPQRGREWRKTESKIKGLRSFNNWIKSTLIQKFSPDEEFVARSIGTKDWADETAPPPMEDKRLLVVDLGCGKGGDLGKWQLAPQPVDLYVGLDPAEVSIVQARERYNGMRTGRGPRGRRGPLFHAEFAPKDCFGEYLGDVPIVQQVGIDPNAGPGGSVMSSRWGGGGFDVVASMFTIHYAFESEEKARQMLRNVAGCLKKGGRFLGVCPNSDIISARVAEMNAKRKERETAAKKEEAEPEDGEVEEDDNKIEWGNSIYRVRFSGDTPEDGIFRPPFGWKYSYFMEEAVEEIPEYVVPWEAFRALTEDYNLELQYRKPFLEVWKDEKDDQELGPLSERMGVRDRNTGALLMTEEEKEAASFYHAFCFYKV</sequence>